<dbReference type="EMBL" id="CP000524">
    <property type="protein sequence ID" value="ABM44736.1"/>
    <property type="molecule type" value="Genomic_DNA"/>
</dbReference>
<dbReference type="RefSeq" id="WP_005767991.1">
    <property type="nucleotide sequence ID" value="NC_008783.1"/>
</dbReference>
<dbReference type="SMR" id="A1UU53"/>
<dbReference type="STRING" id="360095.BARBAKC583_1257"/>
<dbReference type="GeneID" id="4683824"/>
<dbReference type="KEGG" id="bbk:BARBAKC583_1257"/>
<dbReference type="PATRIC" id="fig|360095.6.peg.1233"/>
<dbReference type="eggNOG" id="COG0184">
    <property type="taxonomic scope" value="Bacteria"/>
</dbReference>
<dbReference type="HOGENOM" id="CLU_148518_0_0_5"/>
<dbReference type="OrthoDB" id="9799262at2"/>
<dbReference type="Proteomes" id="UP000000643">
    <property type="component" value="Chromosome"/>
</dbReference>
<dbReference type="GO" id="GO:0022627">
    <property type="term" value="C:cytosolic small ribosomal subunit"/>
    <property type="evidence" value="ECO:0007669"/>
    <property type="project" value="TreeGrafter"/>
</dbReference>
<dbReference type="GO" id="GO:0019843">
    <property type="term" value="F:rRNA binding"/>
    <property type="evidence" value="ECO:0007669"/>
    <property type="project" value="UniProtKB-UniRule"/>
</dbReference>
<dbReference type="GO" id="GO:0003735">
    <property type="term" value="F:structural constituent of ribosome"/>
    <property type="evidence" value="ECO:0007669"/>
    <property type="project" value="InterPro"/>
</dbReference>
<dbReference type="GO" id="GO:0006412">
    <property type="term" value="P:translation"/>
    <property type="evidence" value="ECO:0007669"/>
    <property type="project" value="UniProtKB-UniRule"/>
</dbReference>
<dbReference type="CDD" id="cd00353">
    <property type="entry name" value="Ribosomal_S15p_S13e"/>
    <property type="match status" value="1"/>
</dbReference>
<dbReference type="FunFam" id="1.10.287.10:FF:000002">
    <property type="entry name" value="30S ribosomal protein S15"/>
    <property type="match status" value="1"/>
</dbReference>
<dbReference type="Gene3D" id="6.10.250.3130">
    <property type="match status" value="1"/>
</dbReference>
<dbReference type="Gene3D" id="1.10.287.10">
    <property type="entry name" value="S15/NS1, RNA-binding"/>
    <property type="match status" value="1"/>
</dbReference>
<dbReference type="HAMAP" id="MF_01343_B">
    <property type="entry name" value="Ribosomal_uS15_B"/>
    <property type="match status" value="1"/>
</dbReference>
<dbReference type="InterPro" id="IPR000589">
    <property type="entry name" value="Ribosomal_uS15"/>
</dbReference>
<dbReference type="InterPro" id="IPR005290">
    <property type="entry name" value="Ribosomal_uS15_bac-type"/>
</dbReference>
<dbReference type="InterPro" id="IPR009068">
    <property type="entry name" value="uS15_NS1_RNA-bd_sf"/>
</dbReference>
<dbReference type="NCBIfam" id="TIGR00952">
    <property type="entry name" value="S15_bact"/>
    <property type="match status" value="1"/>
</dbReference>
<dbReference type="PANTHER" id="PTHR23321">
    <property type="entry name" value="RIBOSOMAL PROTEIN S15, BACTERIAL AND ORGANELLAR"/>
    <property type="match status" value="1"/>
</dbReference>
<dbReference type="PANTHER" id="PTHR23321:SF26">
    <property type="entry name" value="SMALL RIBOSOMAL SUBUNIT PROTEIN US15M"/>
    <property type="match status" value="1"/>
</dbReference>
<dbReference type="Pfam" id="PF00312">
    <property type="entry name" value="Ribosomal_S15"/>
    <property type="match status" value="1"/>
</dbReference>
<dbReference type="SMART" id="SM01387">
    <property type="entry name" value="Ribosomal_S15"/>
    <property type="match status" value="1"/>
</dbReference>
<dbReference type="SUPFAM" id="SSF47060">
    <property type="entry name" value="S15/NS1 RNA-binding domain"/>
    <property type="match status" value="1"/>
</dbReference>
<dbReference type="PROSITE" id="PS00362">
    <property type="entry name" value="RIBOSOMAL_S15"/>
    <property type="match status" value="1"/>
</dbReference>
<protein>
    <recommendedName>
        <fullName evidence="1">Small ribosomal subunit protein uS15</fullName>
    </recommendedName>
    <alternativeName>
        <fullName evidence="2">30S ribosomal protein S15</fullName>
    </alternativeName>
</protein>
<accession>A1UU53</accession>
<sequence>MSITAERKQELITEYATKAGDTGSPEVQVAVLSERISNLTNHFKSHKKDNHSRRGLLKMVSQRRRLLDYLKEVNHSRYQVLIEKLGLRR</sequence>
<name>RS15_BARBK</name>
<keyword id="KW-0687">Ribonucleoprotein</keyword>
<keyword id="KW-0689">Ribosomal protein</keyword>
<keyword id="KW-0694">RNA-binding</keyword>
<keyword id="KW-0699">rRNA-binding</keyword>
<gene>
    <name evidence="1" type="primary">rpsO</name>
    <name type="ordered locus">BARBAKC583_1257</name>
</gene>
<reference key="1">
    <citation type="submission" date="2006-12" db="EMBL/GenBank/DDBJ databases">
        <authorList>
            <person name="Hendrix L."/>
            <person name="Mohamoud Y."/>
            <person name="Radune D."/>
            <person name="Shvartsbeyn A."/>
            <person name="Daugherty S."/>
            <person name="Dodson R."/>
            <person name="Durkin A.S."/>
            <person name="Harkins D."/>
            <person name="Huot H."/>
            <person name="Kothari S.P."/>
            <person name="Madupu R."/>
            <person name="Li J."/>
            <person name="Nelson W.C."/>
            <person name="Shrivastava S."/>
            <person name="Giglio M.G."/>
            <person name="Haft D."/>
            <person name="Selengut J."/>
            <person name="Fraser-Ligget C."/>
            <person name="Seshadri R."/>
        </authorList>
    </citation>
    <scope>NUCLEOTIDE SEQUENCE [LARGE SCALE GENOMIC DNA]</scope>
    <source>
        <strain>ATCC 35685 / KC583 / Herrer 020/F12,63</strain>
    </source>
</reference>
<evidence type="ECO:0000255" key="1">
    <source>
        <dbReference type="HAMAP-Rule" id="MF_01343"/>
    </source>
</evidence>
<evidence type="ECO:0000305" key="2"/>
<organism>
    <name type="scientific">Bartonella bacilliformis (strain ATCC 35685 / KC583 / Herrer 020/F12,63)</name>
    <dbReference type="NCBI Taxonomy" id="360095"/>
    <lineage>
        <taxon>Bacteria</taxon>
        <taxon>Pseudomonadati</taxon>
        <taxon>Pseudomonadota</taxon>
        <taxon>Alphaproteobacteria</taxon>
        <taxon>Hyphomicrobiales</taxon>
        <taxon>Bartonellaceae</taxon>
        <taxon>Bartonella</taxon>
    </lineage>
</organism>
<feature type="chain" id="PRO_1000054752" description="Small ribosomal subunit protein uS15">
    <location>
        <begin position="1"/>
        <end position="89"/>
    </location>
</feature>
<comment type="function">
    <text evidence="1">One of the primary rRNA binding proteins, it binds directly to 16S rRNA where it helps nucleate assembly of the platform of the 30S subunit by binding and bridging several RNA helices of the 16S rRNA.</text>
</comment>
<comment type="function">
    <text evidence="1">Forms an intersubunit bridge (bridge B4) with the 23S rRNA of the 50S subunit in the ribosome.</text>
</comment>
<comment type="subunit">
    <text evidence="1">Part of the 30S ribosomal subunit. Forms a bridge to the 50S subunit in the 70S ribosome, contacting the 23S rRNA.</text>
</comment>
<comment type="similarity">
    <text evidence="1">Belongs to the universal ribosomal protein uS15 family.</text>
</comment>
<proteinExistence type="inferred from homology"/>